<protein>
    <recommendedName>
        <fullName>Potassium transporter 23</fullName>
    </recommendedName>
    <alternativeName>
        <fullName>OsHAK23</fullName>
    </alternativeName>
</protein>
<feature type="chain" id="PRO_0000379538" description="Potassium transporter 23">
    <location>
        <begin position="1"/>
        <end position="877"/>
    </location>
</feature>
<feature type="topological domain" description="Cytoplasmic" evidence="2">
    <location>
        <begin position="1"/>
        <end position="126"/>
    </location>
</feature>
<feature type="transmembrane region" description="Helical; Name=1" evidence="2">
    <location>
        <begin position="127"/>
        <end position="147"/>
    </location>
</feature>
<feature type="topological domain" description="Extracellular" evidence="2">
    <location>
        <begin position="148"/>
        <end position="173"/>
    </location>
</feature>
<feature type="transmembrane region" description="Helical; Name=2" evidence="2">
    <location>
        <begin position="174"/>
        <end position="194"/>
    </location>
</feature>
<feature type="topological domain" description="Cytoplasmic" evidence="2">
    <location>
        <begin position="195"/>
        <end position="260"/>
    </location>
</feature>
<feature type="transmembrane region" description="Helical; Name=3" evidence="2">
    <location>
        <begin position="261"/>
        <end position="281"/>
    </location>
</feature>
<feature type="topological domain" description="Extracellular" evidence="2">
    <location>
        <begin position="282"/>
        <end position="295"/>
    </location>
</feature>
<feature type="transmembrane region" description="Helical; Name=4" evidence="2">
    <location>
        <begin position="296"/>
        <end position="316"/>
    </location>
</feature>
<feature type="topological domain" description="Cytoplasmic" evidence="2">
    <location>
        <begin position="317"/>
        <end position="325"/>
    </location>
</feature>
<feature type="transmembrane region" description="Helical; Name=5" evidence="2">
    <location>
        <begin position="326"/>
        <end position="346"/>
    </location>
</feature>
<feature type="topological domain" description="Extracellular" evidence="2">
    <location>
        <begin position="347"/>
        <end position="379"/>
    </location>
</feature>
<feature type="transmembrane region" description="Helical; Name=6" evidence="2">
    <location>
        <begin position="380"/>
        <end position="400"/>
    </location>
</feature>
<feature type="topological domain" description="Cytoplasmic" evidence="2">
    <location>
        <begin position="401"/>
        <end position="406"/>
    </location>
</feature>
<feature type="transmembrane region" description="Helical; Name=7" evidence="2">
    <location>
        <begin position="407"/>
        <end position="427"/>
    </location>
</feature>
<feature type="topological domain" description="Extracellular" evidence="2">
    <location>
        <begin position="428"/>
        <end position="441"/>
    </location>
</feature>
<feature type="transmembrane region" description="Helical; Name=8" evidence="2">
    <location>
        <begin position="442"/>
        <end position="462"/>
    </location>
</feature>
<feature type="topological domain" description="Cytoplasmic" evidence="2">
    <location>
        <begin position="463"/>
        <end position="498"/>
    </location>
</feature>
<feature type="transmembrane region" description="Helical; Name=9" evidence="2">
    <location>
        <begin position="499"/>
        <end position="519"/>
    </location>
</feature>
<feature type="topological domain" description="Extracellular" evidence="2">
    <location>
        <begin position="520"/>
        <end position="524"/>
    </location>
</feature>
<feature type="transmembrane region" description="Helical; Name=10" evidence="2">
    <location>
        <begin position="525"/>
        <end position="545"/>
    </location>
</feature>
<feature type="topological domain" description="Cytoplasmic" evidence="2">
    <location>
        <begin position="546"/>
        <end position="555"/>
    </location>
</feature>
<feature type="transmembrane region" description="Helical; Name=11" evidence="2">
    <location>
        <begin position="556"/>
        <end position="578"/>
    </location>
</feature>
<feature type="topological domain" description="Extracellular" evidence="2">
    <location>
        <begin position="579"/>
        <end position="583"/>
    </location>
</feature>
<feature type="transmembrane region" description="Helical; Name=12" evidence="2">
    <location>
        <begin position="584"/>
        <end position="604"/>
    </location>
</feature>
<feature type="topological domain" description="Cytoplasmic" evidence="2">
    <location>
        <begin position="605"/>
        <end position="877"/>
    </location>
</feature>
<feature type="region of interest" description="Disordered" evidence="3">
    <location>
        <begin position="1"/>
        <end position="60"/>
    </location>
</feature>
<feature type="region of interest" description="Disordered" evidence="3">
    <location>
        <begin position="72"/>
        <end position="92"/>
    </location>
</feature>
<feature type="compositionally biased region" description="Pro residues" evidence="3">
    <location>
        <begin position="12"/>
        <end position="28"/>
    </location>
</feature>
<feature type="compositionally biased region" description="Gly residues" evidence="3">
    <location>
        <begin position="76"/>
        <end position="86"/>
    </location>
</feature>
<feature type="sequence conflict" description="In Ref. 5; AK070831." evidence="4" ref="5">
    <location>
        <position position="27"/>
    </location>
</feature>
<proteinExistence type="evidence at transcript level"/>
<organism>
    <name type="scientific">Oryza sativa subsp. japonica</name>
    <name type="common">Rice</name>
    <dbReference type="NCBI Taxonomy" id="39947"/>
    <lineage>
        <taxon>Eukaryota</taxon>
        <taxon>Viridiplantae</taxon>
        <taxon>Streptophyta</taxon>
        <taxon>Embryophyta</taxon>
        <taxon>Tracheophyta</taxon>
        <taxon>Spermatophyta</taxon>
        <taxon>Magnoliopsida</taxon>
        <taxon>Liliopsida</taxon>
        <taxon>Poales</taxon>
        <taxon>Poaceae</taxon>
        <taxon>BOP clade</taxon>
        <taxon>Oryzoideae</taxon>
        <taxon>Oryzeae</taxon>
        <taxon>Oryzinae</taxon>
        <taxon>Oryza</taxon>
        <taxon>Oryza sativa</taxon>
    </lineage>
</organism>
<keyword id="KW-0406">Ion transport</keyword>
<keyword id="KW-0472">Membrane</keyword>
<keyword id="KW-0630">Potassium</keyword>
<keyword id="KW-0633">Potassium transport</keyword>
<keyword id="KW-1185">Reference proteome</keyword>
<keyword id="KW-0812">Transmembrane</keyword>
<keyword id="KW-1133">Transmembrane helix</keyword>
<keyword id="KW-0813">Transport</keyword>
<accession>Q6H4R6</accession>
<accession>A0A0P0XLJ1</accession>
<evidence type="ECO:0000250" key="1"/>
<evidence type="ECO:0000255" key="2"/>
<evidence type="ECO:0000256" key="3">
    <source>
        <dbReference type="SAM" id="MobiDB-lite"/>
    </source>
</evidence>
<evidence type="ECO:0000305" key="4"/>
<comment type="function">
    <text evidence="1">High-affinity potassium transporter.</text>
</comment>
<comment type="subcellular location">
    <subcellularLocation>
        <location evidence="4">Membrane</location>
        <topology evidence="4">Multi-pass membrane protein</topology>
    </subcellularLocation>
</comment>
<comment type="similarity">
    <text evidence="4">Belongs to the HAK/KUP transporter (TC 2.A.72.3) family.</text>
</comment>
<comment type="sequence caution" evidence="4">
    <conflict type="frameshift">
        <sequence resource="EMBL" id="AK070831"/>
    </conflict>
</comment>
<sequence length="877" mass="96336">MDDDDSGIQEEPAPPPPPPPPPPPPPPLRRLLTATRSGGSRWVDGSEVGSSESAPWSLDGDRSLRLSVDSAASAGGASGGGGGGGPLSRASSGAFRRRFGKQPRRVDSLDVEAMSVRGAHGHSSKEISMLSTVAMAFQTLGVVYGDMGTSPLYVFSDVFSKVPIKSEVEILGALSLVMYTIALIPFAKYVFIVLKANDNGEGGTFALYSLICRYAKVSLLPNQQRVDEDISSFRLKLPTPELERALSVKESLEKNPVFKNILLFLVLMGTSMVIGDGILTPSMSVMSAVSGLQGRVPGFGTDAVVIVSILFLVLLFSVQRFGTGKVGFMFAPILALWFINLGTIGIYNLAKYDISVVRAFNPVYIYLFFQTNGIKAWSALGGCVLCITGAEAMFADLGHFSVKSIQVAFTAVVFPCLLIAYMGQAAYLMKYPFAVERIFYDSVPEILFWPVFVIATLAAMIASQAMISATFSCIKQAMALGCFPRIKIIHTSKKVMGQIYIPVMNWFLMVMCIIIVATFRSTNDIANAYGIAEVGVMMVSTALVTLVMLLIWQTNLFLVMCFPVIFGSVEFVYLTAVLSKIQEGGWLPLAFSSLFLCIMYTWNYGSVLKYQSEMRGKISLDFILDLGSTLGTVRVPGIGLVYNELVQGIPSIFGHLLVTLPAMHSTIVFVCIKYVPVPYVPFEERFLFRRIGQKDYHMFRCVARYGYKDVRKEEHGFFEQLLVETLEKFLRKESQEMALEASAMAVERDDVSVVSDIPSSPVEAGDLHVPLLSDQRLGDGTQTFITEGNTPVLPTSSISEEDPSLEYELESLREAIASGFTYLLAHGDVRARKESFFTKKFIINYFYAFLRRNCRAGTATLKVPHSNIMRVGMTYMV</sequence>
<name>HAK23_ORYSJ</name>
<dbReference type="EMBL" id="AP005637">
    <property type="protein sequence ID" value="BAD26044.1"/>
    <property type="molecule type" value="Genomic_DNA"/>
</dbReference>
<dbReference type="EMBL" id="AP005838">
    <property type="protein sequence ID" value="BAD26283.1"/>
    <property type="molecule type" value="Genomic_DNA"/>
</dbReference>
<dbReference type="EMBL" id="AP008215">
    <property type="protein sequence ID" value="BAF24960.1"/>
    <property type="molecule type" value="Genomic_DNA"/>
</dbReference>
<dbReference type="EMBL" id="AP014965">
    <property type="protein sequence ID" value="BAT07814.1"/>
    <property type="molecule type" value="Genomic_DNA"/>
</dbReference>
<dbReference type="EMBL" id="CM000146">
    <property type="protein sequence ID" value="EAZ44543.1"/>
    <property type="molecule type" value="Genomic_DNA"/>
</dbReference>
<dbReference type="EMBL" id="AK070831">
    <property type="status" value="NOT_ANNOTATED_CDS"/>
    <property type="molecule type" value="mRNA"/>
</dbReference>
<dbReference type="RefSeq" id="XP_015612103.1">
    <property type="nucleotide sequence ID" value="XM_015756617.1"/>
</dbReference>
<dbReference type="FunCoup" id="Q6H4R6">
    <property type="interactions" value="64"/>
</dbReference>
<dbReference type="STRING" id="39947.Q6H4R6"/>
<dbReference type="iPTMnet" id="Q6H4R6"/>
<dbReference type="PaxDb" id="39947-Q6H4R6"/>
<dbReference type="EnsemblPlants" id="Os09t0376900-01">
    <property type="protein sequence ID" value="Os09t0376900-01"/>
    <property type="gene ID" value="Os09g0376900"/>
</dbReference>
<dbReference type="Gramene" id="Os09t0376900-01">
    <property type="protein sequence ID" value="Os09t0376900-01"/>
    <property type="gene ID" value="Os09g0376900"/>
</dbReference>
<dbReference type="KEGG" id="dosa:Os09g0376900"/>
<dbReference type="eggNOG" id="ENOG502QPSA">
    <property type="taxonomic scope" value="Eukaryota"/>
</dbReference>
<dbReference type="HOGENOM" id="CLU_008142_2_0_1"/>
<dbReference type="InParanoid" id="Q6H4R6"/>
<dbReference type="OMA" id="VTFITTC"/>
<dbReference type="OrthoDB" id="504708at2759"/>
<dbReference type="Proteomes" id="UP000000763">
    <property type="component" value="Chromosome 9"/>
</dbReference>
<dbReference type="Proteomes" id="UP000007752">
    <property type="component" value="Chromosome 9"/>
</dbReference>
<dbReference type="Proteomes" id="UP000059680">
    <property type="component" value="Chromosome 9"/>
</dbReference>
<dbReference type="ExpressionAtlas" id="Q6H4R6">
    <property type="expression patterns" value="baseline and differential"/>
</dbReference>
<dbReference type="GO" id="GO:0016020">
    <property type="term" value="C:membrane"/>
    <property type="evidence" value="ECO:0000318"/>
    <property type="project" value="GO_Central"/>
</dbReference>
<dbReference type="GO" id="GO:0015079">
    <property type="term" value="F:potassium ion transmembrane transporter activity"/>
    <property type="evidence" value="ECO:0000318"/>
    <property type="project" value="GO_Central"/>
</dbReference>
<dbReference type="GO" id="GO:0048825">
    <property type="term" value="P:cotyledon development"/>
    <property type="evidence" value="ECO:0007669"/>
    <property type="project" value="EnsemblPlants"/>
</dbReference>
<dbReference type="GO" id="GO:0006813">
    <property type="term" value="P:potassium ion transport"/>
    <property type="evidence" value="ECO:0000318"/>
    <property type="project" value="GO_Central"/>
</dbReference>
<dbReference type="InterPro" id="IPR003855">
    <property type="entry name" value="K+_transporter"/>
</dbReference>
<dbReference type="InterPro" id="IPR053952">
    <property type="entry name" value="K_trans_C"/>
</dbReference>
<dbReference type="InterPro" id="IPR053951">
    <property type="entry name" value="K_trans_N"/>
</dbReference>
<dbReference type="NCBIfam" id="TIGR00794">
    <property type="entry name" value="kup"/>
    <property type="match status" value="1"/>
</dbReference>
<dbReference type="PANTHER" id="PTHR30540">
    <property type="entry name" value="OSMOTIC STRESS POTASSIUM TRANSPORTER"/>
    <property type="match status" value="1"/>
</dbReference>
<dbReference type="PANTHER" id="PTHR30540:SF4">
    <property type="entry name" value="POTASSIUM TRANSPORTER 12-RELATED"/>
    <property type="match status" value="1"/>
</dbReference>
<dbReference type="Pfam" id="PF02705">
    <property type="entry name" value="K_trans"/>
    <property type="match status" value="1"/>
</dbReference>
<dbReference type="Pfam" id="PF22776">
    <property type="entry name" value="K_trans_C"/>
    <property type="match status" value="1"/>
</dbReference>
<gene>
    <name type="primary">HAK23</name>
    <name type="ordered locus">Os09g0376900</name>
    <name type="ordered locus">LOC_Os09g21000</name>
    <name type="ORF">OsJ_29162</name>
    <name type="ORF">OSJNBa0041C07.15-1</name>
    <name type="ORF">P0711A01.29-1</name>
</gene>
<reference key="1">
    <citation type="journal article" date="2005" name="Nature">
        <title>The map-based sequence of the rice genome.</title>
        <authorList>
            <consortium name="International rice genome sequencing project (IRGSP)"/>
        </authorList>
    </citation>
    <scope>NUCLEOTIDE SEQUENCE [LARGE SCALE GENOMIC DNA]</scope>
    <source>
        <strain>cv. Nipponbare</strain>
    </source>
</reference>
<reference key="2">
    <citation type="journal article" date="2008" name="Nucleic Acids Res.">
        <title>The rice annotation project database (RAP-DB): 2008 update.</title>
        <authorList>
            <consortium name="The rice annotation project (RAP)"/>
        </authorList>
    </citation>
    <scope>GENOME REANNOTATION</scope>
    <source>
        <strain>cv. Nipponbare</strain>
    </source>
</reference>
<reference key="3">
    <citation type="journal article" date="2013" name="Rice">
        <title>Improvement of the Oryza sativa Nipponbare reference genome using next generation sequence and optical map data.</title>
        <authorList>
            <person name="Kawahara Y."/>
            <person name="de la Bastide M."/>
            <person name="Hamilton J.P."/>
            <person name="Kanamori H."/>
            <person name="McCombie W.R."/>
            <person name="Ouyang S."/>
            <person name="Schwartz D.C."/>
            <person name="Tanaka T."/>
            <person name="Wu J."/>
            <person name="Zhou S."/>
            <person name="Childs K.L."/>
            <person name="Davidson R.M."/>
            <person name="Lin H."/>
            <person name="Quesada-Ocampo L."/>
            <person name="Vaillancourt B."/>
            <person name="Sakai H."/>
            <person name="Lee S.S."/>
            <person name="Kim J."/>
            <person name="Numa H."/>
            <person name="Itoh T."/>
            <person name="Buell C.R."/>
            <person name="Matsumoto T."/>
        </authorList>
    </citation>
    <scope>GENOME REANNOTATION</scope>
    <source>
        <strain>cv. Nipponbare</strain>
    </source>
</reference>
<reference key="4">
    <citation type="journal article" date="2005" name="PLoS Biol.">
        <title>The genomes of Oryza sativa: a history of duplications.</title>
        <authorList>
            <person name="Yu J."/>
            <person name="Wang J."/>
            <person name="Lin W."/>
            <person name="Li S."/>
            <person name="Li H."/>
            <person name="Zhou J."/>
            <person name="Ni P."/>
            <person name="Dong W."/>
            <person name="Hu S."/>
            <person name="Zeng C."/>
            <person name="Zhang J."/>
            <person name="Zhang Y."/>
            <person name="Li R."/>
            <person name="Xu Z."/>
            <person name="Li S."/>
            <person name="Li X."/>
            <person name="Zheng H."/>
            <person name="Cong L."/>
            <person name="Lin L."/>
            <person name="Yin J."/>
            <person name="Geng J."/>
            <person name="Li G."/>
            <person name="Shi J."/>
            <person name="Liu J."/>
            <person name="Lv H."/>
            <person name="Li J."/>
            <person name="Wang J."/>
            <person name="Deng Y."/>
            <person name="Ran L."/>
            <person name="Shi X."/>
            <person name="Wang X."/>
            <person name="Wu Q."/>
            <person name="Li C."/>
            <person name="Ren X."/>
            <person name="Wang J."/>
            <person name="Wang X."/>
            <person name="Li D."/>
            <person name="Liu D."/>
            <person name="Zhang X."/>
            <person name="Ji Z."/>
            <person name="Zhao W."/>
            <person name="Sun Y."/>
            <person name="Zhang Z."/>
            <person name="Bao J."/>
            <person name="Han Y."/>
            <person name="Dong L."/>
            <person name="Ji J."/>
            <person name="Chen P."/>
            <person name="Wu S."/>
            <person name="Liu J."/>
            <person name="Xiao Y."/>
            <person name="Bu D."/>
            <person name="Tan J."/>
            <person name="Yang L."/>
            <person name="Ye C."/>
            <person name="Zhang J."/>
            <person name="Xu J."/>
            <person name="Zhou Y."/>
            <person name="Yu Y."/>
            <person name="Zhang B."/>
            <person name="Zhuang S."/>
            <person name="Wei H."/>
            <person name="Liu B."/>
            <person name="Lei M."/>
            <person name="Yu H."/>
            <person name="Li Y."/>
            <person name="Xu H."/>
            <person name="Wei S."/>
            <person name="He X."/>
            <person name="Fang L."/>
            <person name="Zhang Z."/>
            <person name="Zhang Y."/>
            <person name="Huang X."/>
            <person name="Su Z."/>
            <person name="Tong W."/>
            <person name="Li J."/>
            <person name="Tong Z."/>
            <person name="Li S."/>
            <person name="Ye J."/>
            <person name="Wang L."/>
            <person name="Fang L."/>
            <person name="Lei T."/>
            <person name="Chen C.-S."/>
            <person name="Chen H.-C."/>
            <person name="Xu Z."/>
            <person name="Li H."/>
            <person name="Huang H."/>
            <person name="Zhang F."/>
            <person name="Xu H."/>
            <person name="Li N."/>
            <person name="Zhao C."/>
            <person name="Li S."/>
            <person name="Dong L."/>
            <person name="Huang Y."/>
            <person name="Li L."/>
            <person name="Xi Y."/>
            <person name="Qi Q."/>
            <person name="Li W."/>
            <person name="Zhang B."/>
            <person name="Hu W."/>
            <person name="Zhang Y."/>
            <person name="Tian X."/>
            <person name="Jiao Y."/>
            <person name="Liang X."/>
            <person name="Jin J."/>
            <person name="Gao L."/>
            <person name="Zheng W."/>
            <person name="Hao B."/>
            <person name="Liu S.-M."/>
            <person name="Wang W."/>
            <person name="Yuan L."/>
            <person name="Cao M."/>
            <person name="McDermott J."/>
            <person name="Samudrala R."/>
            <person name="Wang J."/>
            <person name="Wong G.K.-S."/>
            <person name="Yang H."/>
        </authorList>
    </citation>
    <scope>NUCLEOTIDE SEQUENCE [LARGE SCALE GENOMIC DNA]</scope>
    <source>
        <strain>cv. Nipponbare</strain>
    </source>
</reference>
<reference key="5">
    <citation type="journal article" date="2003" name="Science">
        <title>Collection, mapping, and annotation of over 28,000 cDNA clones from japonica rice.</title>
        <authorList>
            <consortium name="The rice full-length cDNA consortium"/>
        </authorList>
    </citation>
    <scope>NUCLEOTIDE SEQUENCE [LARGE SCALE MRNA]</scope>
    <source>
        <strain>cv. Nipponbare</strain>
    </source>
</reference>
<reference key="6">
    <citation type="journal article" date="2009" name="J. Genet. Genomics">
        <title>Molecular evolution and functional divergence of HAK potassium transporter gene family in rice (Oryza sativa L.).</title>
        <authorList>
            <person name="Yang Z."/>
            <person name="Gao Q."/>
            <person name="Sun C."/>
            <person name="Li W."/>
            <person name="Gu S."/>
            <person name="Xu C."/>
        </authorList>
    </citation>
    <scope>GENE FAMILY</scope>
</reference>